<evidence type="ECO:0000250" key="1">
    <source>
        <dbReference type="UniProtKB" id="Q00403"/>
    </source>
</evidence>
<evidence type="ECO:0000255" key="2">
    <source>
        <dbReference type="PROSITE-ProRule" id="PRU00469"/>
    </source>
</evidence>
<evidence type="ECO:0000269" key="3">
    <source>
    </source>
</evidence>
<evidence type="ECO:0000305" key="4"/>
<evidence type="ECO:0000312" key="5">
    <source>
        <dbReference type="MGI" id="MGI:2385191"/>
    </source>
</evidence>
<name>TF2B_MOUSE</name>
<proteinExistence type="evidence at protein level"/>
<reference key="1">
    <citation type="journal article" date="2004" name="Genome Res.">
        <title>The status, quality, and expansion of the NIH full-length cDNA project: the Mammalian Gene Collection (MGC).</title>
        <authorList>
            <consortium name="The MGC Project Team"/>
        </authorList>
    </citation>
    <scope>NUCLEOTIDE SEQUENCE [LARGE SCALE MRNA]</scope>
</reference>
<reference key="2">
    <citation type="journal article" date="2003" name="Mol. Cell. Biol.">
        <title>The murine G+C-rich promoter binding protein mGPBP is required for promoter-specific transcription.</title>
        <authorList>
            <person name="Hsu L.-C."/>
            <person name="Liu S."/>
            <person name="Abedinpour F."/>
            <person name="Beech R.D."/>
            <person name="Lahti J.M."/>
            <person name="Kidd V.J."/>
            <person name="Greenspan J.A."/>
            <person name="Yeung C.-Y."/>
        </authorList>
    </citation>
    <scope>INTERACTION WITH GPBP1</scope>
</reference>
<reference key="3">
    <citation type="journal article" date="2010" name="Cell">
        <title>A tissue-specific atlas of mouse protein phosphorylation and expression.</title>
        <authorList>
            <person name="Huttlin E.L."/>
            <person name="Jedrychowski M.P."/>
            <person name="Elias J.E."/>
            <person name="Goswami T."/>
            <person name="Rad R."/>
            <person name="Beausoleil S.A."/>
            <person name="Villen J."/>
            <person name="Haas W."/>
            <person name="Sowa M.E."/>
            <person name="Gygi S.P."/>
        </authorList>
    </citation>
    <scope>IDENTIFICATION BY MASS SPECTROMETRY [LARGE SCALE ANALYSIS]</scope>
    <source>
        <tissue>Brain</tissue>
        <tissue>Kidney</tissue>
        <tissue>Liver</tissue>
        <tissue>Lung</tissue>
        <tissue>Spleen</tissue>
        <tissue>Testis</tissue>
    </source>
</reference>
<accession>P62915</accession>
<accession>P29053</accession>
<protein>
    <recommendedName>
        <fullName evidence="1">Transcription initiation factor IIB</fullName>
        <ecNumber evidence="1">2.3.1.48</ecNumber>
    </recommendedName>
    <alternativeName>
        <fullName evidence="1">General transcription factor TFIIB</fullName>
    </alternativeName>
    <alternativeName>
        <fullName>RNA polymerase II alpha initiation factor</fullName>
    </alternativeName>
</protein>
<organism>
    <name type="scientific">Mus musculus</name>
    <name type="common">Mouse</name>
    <dbReference type="NCBI Taxonomy" id="10090"/>
    <lineage>
        <taxon>Eukaryota</taxon>
        <taxon>Metazoa</taxon>
        <taxon>Chordata</taxon>
        <taxon>Craniata</taxon>
        <taxon>Vertebrata</taxon>
        <taxon>Euteleostomi</taxon>
        <taxon>Mammalia</taxon>
        <taxon>Eutheria</taxon>
        <taxon>Euarchontoglires</taxon>
        <taxon>Glires</taxon>
        <taxon>Rodentia</taxon>
        <taxon>Myomorpha</taxon>
        <taxon>Muroidea</taxon>
        <taxon>Muridae</taxon>
        <taxon>Murinae</taxon>
        <taxon>Mus</taxon>
        <taxon>Mus</taxon>
    </lineage>
</organism>
<gene>
    <name evidence="5" type="primary">Gtf2b</name>
</gene>
<keyword id="KW-0002">3D-structure</keyword>
<keyword id="KW-0007">Acetylation</keyword>
<keyword id="KW-0012">Acyltransferase</keyword>
<keyword id="KW-0158">Chromosome</keyword>
<keyword id="KW-0238">DNA-binding</keyword>
<keyword id="KW-0479">Metal-binding</keyword>
<keyword id="KW-0539">Nucleus</keyword>
<keyword id="KW-0597">Phosphoprotein</keyword>
<keyword id="KW-1185">Reference proteome</keyword>
<keyword id="KW-0677">Repeat</keyword>
<keyword id="KW-0804">Transcription</keyword>
<keyword id="KW-0805">Transcription regulation</keyword>
<keyword id="KW-0808">Transferase</keyword>
<keyword id="KW-0862">Zinc</keyword>
<keyword id="KW-0863">Zinc-finger</keyword>
<feature type="chain" id="PRO_0000119294" description="Transcription initiation factor IIB">
    <location>
        <begin position="1"/>
        <end position="316"/>
    </location>
</feature>
<feature type="repeat" description="1">
    <location>
        <begin position="124"/>
        <end position="200"/>
    </location>
</feature>
<feature type="repeat" description="2">
    <location>
        <begin position="218"/>
        <end position="294"/>
    </location>
</feature>
<feature type="zinc finger region" description="TFIIB-type" evidence="2">
    <location>
        <begin position="11"/>
        <end position="42"/>
    </location>
</feature>
<feature type="region of interest" description="Core promoter DNA-binding" evidence="1">
    <location>
        <begin position="189"/>
        <end position="193"/>
    </location>
</feature>
<feature type="region of interest" description="Necessary for TATA box-bound TBP complex formation" evidence="1">
    <location>
        <begin position="244"/>
        <end position="316"/>
    </location>
</feature>
<feature type="region of interest" description="Core promoter DNA-binding" evidence="1">
    <location>
        <begin position="249"/>
        <end position="252"/>
    </location>
</feature>
<feature type="region of interest" description="Core promoter DNA-binding" evidence="1">
    <location>
        <begin position="283"/>
        <end position="286"/>
    </location>
</feature>
<feature type="binding site" evidence="2">
    <location>
        <position position="15"/>
    </location>
    <ligand>
        <name>Zn(2+)</name>
        <dbReference type="ChEBI" id="CHEBI:29105"/>
    </ligand>
</feature>
<feature type="binding site" evidence="2">
    <location>
        <position position="18"/>
    </location>
    <ligand>
        <name>Zn(2+)</name>
        <dbReference type="ChEBI" id="CHEBI:29105"/>
    </ligand>
</feature>
<feature type="binding site" evidence="2">
    <location>
        <position position="34"/>
    </location>
    <ligand>
        <name>Zn(2+)</name>
        <dbReference type="ChEBI" id="CHEBI:29105"/>
    </ligand>
</feature>
<feature type="binding site" evidence="2">
    <location>
        <position position="37"/>
    </location>
    <ligand>
        <name>Zn(2+)</name>
        <dbReference type="ChEBI" id="CHEBI:29105"/>
    </ligand>
</feature>
<feature type="binding site" evidence="1">
    <location>
        <position position="152"/>
    </location>
    <ligand>
        <name>DNA</name>
        <dbReference type="ChEBI" id="CHEBI:16991"/>
    </ligand>
</feature>
<feature type="binding site" evidence="1">
    <location>
        <position position="154"/>
    </location>
    <ligand>
        <name>DNA</name>
        <dbReference type="ChEBI" id="CHEBI:16991"/>
    </ligand>
</feature>
<feature type="binding site" evidence="1">
    <location>
        <position position="189"/>
    </location>
    <ligand>
        <name>DNA</name>
        <dbReference type="ChEBI" id="CHEBI:16991"/>
    </ligand>
</feature>
<feature type="binding site" evidence="1">
    <location>
        <position position="196"/>
    </location>
    <ligand>
        <name>DNA</name>
        <dbReference type="ChEBI" id="CHEBI:16991"/>
    </ligand>
</feature>
<feature type="binding site" evidence="1">
    <location>
        <position position="248"/>
    </location>
    <ligand>
        <name>DNA</name>
        <dbReference type="ChEBI" id="CHEBI:16991"/>
    </ligand>
</feature>
<feature type="binding site" evidence="1">
    <location>
        <position position="272"/>
    </location>
    <ligand>
        <name>DNA</name>
        <dbReference type="ChEBI" id="CHEBI:16991"/>
    </ligand>
</feature>
<feature type="binding site" evidence="1">
    <location>
        <position position="281"/>
    </location>
    <ligand>
        <name>DNA</name>
        <dbReference type="ChEBI" id="CHEBI:16991"/>
    </ligand>
</feature>
<feature type="binding site" evidence="1">
    <location>
        <position position="284"/>
    </location>
    <ligand>
        <name>DNA</name>
        <dbReference type="ChEBI" id="CHEBI:16991"/>
    </ligand>
</feature>
<feature type="binding site" evidence="1">
    <location>
        <position position="286"/>
    </location>
    <ligand>
        <name>DNA</name>
        <dbReference type="ChEBI" id="CHEBI:16991"/>
    </ligand>
</feature>
<feature type="binding site" evidence="1">
    <location>
        <position position="290"/>
    </location>
    <ligand>
        <name>DNA</name>
        <dbReference type="ChEBI" id="CHEBI:16991"/>
    </ligand>
</feature>
<feature type="modified residue" description="Phosphoserine" evidence="1">
    <location>
        <position position="70"/>
    </location>
</feature>
<feature type="modified residue" description="Phosphoserine" evidence="1">
    <location>
        <position position="76"/>
    </location>
</feature>
<feature type="modified residue" description="Phosphoserine" evidence="1">
    <location>
        <position position="92"/>
    </location>
</feature>
<feature type="modified residue" description="N6-acetyllysine; by autocatalysis" evidence="1">
    <location>
        <position position="238"/>
    </location>
</feature>
<sequence>MASTSRLDALPRVTCPNHPDAILVEDYRAGDMICPECGLVVGDRVIDVGSEWRTFSNDKATKDPSRVGDSQNPLLSDGDLSTMIGKGTGAASFDEFGNSKYQNRRTMSSSDRAMMNAFKEITTMADRINLPRNIVDRTNNLFKQVYEQKSLKGRANDAIASACLYIACRQEGVPRTFKEICAVSRISKKEIGRCFKLILKALETSVDLITTGDFMSRFCSNLCLPKQVQMAATHIARKAVELDLVPGRSPISVAAAAIYMASQASAEKRTQKEIGDIAGVADVTIRQSYRLIYPRAPDLFPSDFKFDTPVDKLPQL</sequence>
<comment type="function">
    <text evidence="1">General transcription factor that plays a role in transcription initiation by RNA polymerase II (Pol II). Involved in the pre-initiation complex (PIC) formation and Pol II recruitment at promoter DNA. Together with the TATA box-bound TBP forms the core initiation complex and provides a bridge between TBP and the Pol II-TFIIF complex. Released from the PIC early following the onset of transcription during the initiation and elongation transition and reassociates with TBP during the next transcription cycle. Associates with chromatin to core promoter-specific regions. Binds to two distinct DNA core promoter consensus sequence elements in a TBP-independent manner; these IIB-recognition elements (BREs) are localized immediately upstream (BREu), 5'-[GC][GC][GA]CGCC-3', and downstream (BREd), 5'-[GA]T[TGA][TG][GT][TG][TG]-3', of the TATA box element. Modulates transcription start site selection. Also exhibits autoacetyltransferase activity that contributes to the activated transcription.</text>
</comment>
<comment type="catalytic activity">
    <reaction evidence="1">
        <text>L-lysyl-[protein] + acetyl-CoA = N(6)-acetyl-L-lysyl-[protein] + CoA + H(+)</text>
        <dbReference type="Rhea" id="RHEA:45948"/>
        <dbReference type="Rhea" id="RHEA-COMP:9752"/>
        <dbReference type="Rhea" id="RHEA-COMP:10731"/>
        <dbReference type="ChEBI" id="CHEBI:15378"/>
        <dbReference type="ChEBI" id="CHEBI:29969"/>
        <dbReference type="ChEBI" id="CHEBI:57287"/>
        <dbReference type="ChEBI" id="CHEBI:57288"/>
        <dbReference type="ChEBI" id="CHEBI:61930"/>
        <dbReference type="EC" id="2.3.1.48"/>
    </reaction>
</comment>
<comment type="subunit">
    <text evidence="1 3">Found in a ternary complex with TATA box-bound TBP. Part of a TFIID-containing RNA polymerase II pre-initiation complex (PIC) that is composed of TBP and at least GTF2A1, GTF2A2, GTF2E1, GTF2E2, GTF2F1, GTF2H2, GTF2H3, GTF2H4, GTF2H5, GTF2B, TCEA1, ERCC2, ERCC3, TAF1, TAF2, TAF3, TAF4, TAF5, TAF6, TAF7, TAF8, TAF9, TAF10, TAF11, TAF12 and TAF13. Associates with TFIID-TFIIA (DA complex) to form TFIID-TFIIA-TFIIB (DAB complex), which is then recognized by RNA polymerase II (Pol II). Found in a RNA polymerase II initiation complex. Interacts (via C-terminus) with TBP; this interaction with TATA box-bound TBP guides Pol II into the PIC. Interacts (via N-terminus) with Pol II. Interacts (via C-terminus) with SSU72; this interaction is inhibited by SYMPK. Interacts with NR2F1; this interaction is direct. Interacts with PGR. Interacts with ESR1. Interacts with GTF2F1 (via C-terminus and preferentially via acetylated form); this interaction prevents binding of GTF2B to GTF2F2. Interacts with GTF2F2 (via N-terminus); this interaction is inhibited in presence of GTF2F1. Interacts with the transcription elongation factor TCEA2. Interacts with HSF1 (via transactivation domain) (By similarity). Interacts with GPBP1 (PubMed:14612417).</text>
</comment>
<comment type="subcellular location">
    <subcellularLocation>
        <location evidence="1">Nucleus</location>
    </subcellularLocation>
    <subcellularLocation>
        <location evidence="1">Chromosome</location>
    </subcellularLocation>
    <text evidence="1">Non-acetylated form colocalizes with DNA in the G0/1, S and G2 phases of the cell cycle, but not during mitosis. Acetylated form colocalizes at transcriptionally silent mitotic chromatids during mitosis at metaphase, anaphase, and telophase phases of the cell cycle.</text>
</comment>
<comment type="domain">
    <text evidence="1">The TFIIB-type zinc-binding domain is necessary for the interaction and recruitment of RNA polymerase II to the core promoter, the formation of a fully competent pre-initiation complex (PIC) assembly and basal transcription initiation. The C-terminus is necessary and sufficient for interaction with the TATA box-bound TBP complex and for the formation of PIC.</text>
</comment>
<comment type="PTM">
    <text evidence="1">Acetylated. Autoacetylated; autoacetylation at Lys-238 stimulates transcription activation.</text>
</comment>
<comment type="similarity">
    <text evidence="4">Belongs to the TFIIB family.</text>
</comment>
<dbReference type="EC" id="2.3.1.48" evidence="1"/>
<dbReference type="EMBL" id="BC016637">
    <property type="protein sequence ID" value="AAH16637.1"/>
    <property type="molecule type" value="mRNA"/>
</dbReference>
<dbReference type="CCDS" id="CCDS17882.1"/>
<dbReference type="RefSeq" id="NP_663521.1">
    <property type="nucleotide sequence ID" value="NM_145546.1"/>
</dbReference>
<dbReference type="PDB" id="8D5E">
    <property type="method" value="X-ray"/>
    <property type="resolution" value="2.46 A"/>
    <property type="chains" value="P=88-96"/>
</dbReference>
<dbReference type="PDB" id="8D5F">
    <property type="method" value="X-ray"/>
    <property type="resolution" value="2.31 A"/>
    <property type="chains" value="P=88-96"/>
</dbReference>
<dbReference type="PDBsum" id="8D5E"/>
<dbReference type="PDBsum" id="8D5F"/>
<dbReference type="SMR" id="P62915"/>
<dbReference type="BioGRID" id="230917">
    <property type="interactions" value="26"/>
</dbReference>
<dbReference type="FunCoup" id="P62915">
    <property type="interactions" value="2647"/>
</dbReference>
<dbReference type="IntAct" id="P62915">
    <property type="interactions" value="13"/>
</dbReference>
<dbReference type="STRING" id="10090.ENSMUSP00000029938"/>
<dbReference type="iPTMnet" id="P62915"/>
<dbReference type="PhosphoSitePlus" id="P62915"/>
<dbReference type="SwissPalm" id="P62915"/>
<dbReference type="PaxDb" id="10090-ENSMUSP00000029938"/>
<dbReference type="PeptideAtlas" id="P62915"/>
<dbReference type="ProteomicsDB" id="263035"/>
<dbReference type="Pumba" id="P62915"/>
<dbReference type="Antibodypedia" id="19819">
    <property type="antibodies" value="475 antibodies from 37 providers"/>
</dbReference>
<dbReference type="DNASU" id="229906"/>
<dbReference type="Ensembl" id="ENSMUST00000029938.10">
    <property type="protein sequence ID" value="ENSMUSP00000029938.9"/>
    <property type="gene ID" value="ENSMUSG00000028271.10"/>
</dbReference>
<dbReference type="GeneID" id="229906"/>
<dbReference type="KEGG" id="mmu:229906"/>
<dbReference type="UCSC" id="uc008rpb.1">
    <property type="organism name" value="mouse"/>
</dbReference>
<dbReference type="AGR" id="MGI:2385191"/>
<dbReference type="CTD" id="2959"/>
<dbReference type="MGI" id="MGI:2385191">
    <property type="gene designation" value="Gtf2b"/>
</dbReference>
<dbReference type="VEuPathDB" id="HostDB:ENSMUSG00000028271"/>
<dbReference type="eggNOG" id="KOG1597">
    <property type="taxonomic scope" value="Eukaryota"/>
</dbReference>
<dbReference type="GeneTree" id="ENSGT00390000006671"/>
<dbReference type="HOGENOM" id="CLU_043736_1_1_1"/>
<dbReference type="InParanoid" id="P62915"/>
<dbReference type="OMA" id="DHDQRMK"/>
<dbReference type="OrthoDB" id="25790at2759"/>
<dbReference type="PhylomeDB" id="P62915"/>
<dbReference type="TreeFam" id="TF105953"/>
<dbReference type="Reactome" id="R-MMU-674695">
    <property type="pathway name" value="RNA Polymerase II Pre-transcription Events"/>
</dbReference>
<dbReference type="Reactome" id="R-MMU-6807505">
    <property type="pathway name" value="RNA polymerase II transcribes snRNA genes"/>
</dbReference>
<dbReference type="Reactome" id="R-MMU-73776">
    <property type="pathway name" value="RNA Polymerase II Promoter Escape"/>
</dbReference>
<dbReference type="Reactome" id="R-MMU-73779">
    <property type="pathway name" value="RNA Polymerase II Transcription Pre-Initiation And Promoter Opening"/>
</dbReference>
<dbReference type="Reactome" id="R-MMU-75953">
    <property type="pathway name" value="RNA Polymerase II Transcription Initiation"/>
</dbReference>
<dbReference type="Reactome" id="R-MMU-76042">
    <property type="pathway name" value="RNA Polymerase II Transcription Initiation And Promoter Clearance"/>
</dbReference>
<dbReference type="BioGRID-ORCS" id="229906">
    <property type="hits" value="28 hits in 76 CRISPR screens"/>
</dbReference>
<dbReference type="ChiTaRS" id="Gtf2b">
    <property type="organism name" value="mouse"/>
</dbReference>
<dbReference type="PRO" id="PR:P62915"/>
<dbReference type="Proteomes" id="UP000000589">
    <property type="component" value="Chromosome 3"/>
</dbReference>
<dbReference type="RNAct" id="P62915">
    <property type="molecule type" value="protein"/>
</dbReference>
<dbReference type="Bgee" id="ENSMUSG00000028271">
    <property type="expression patterns" value="Expressed in primary oocyte and 269 other cell types or tissues"/>
</dbReference>
<dbReference type="ExpressionAtlas" id="P62915">
    <property type="expression patterns" value="baseline and differential"/>
</dbReference>
<dbReference type="GO" id="GO:0032153">
    <property type="term" value="C:cell division site"/>
    <property type="evidence" value="ECO:0000314"/>
    <property type="project" value="MGI"/>
</dbReference>
<dbReference type="GO" id="GO:0005694">
    <property type="term" value="C:chromosome"/>
    <property type="evidence" value="ECO:0000250"/>
    <property type="project" value="UniProtKB"/>
</dbReference>
<dbReference type="GO" id="GO:0000793">
    <property type="term" value="C:condensed chromosome"/>
    <property type="evidence" value="ECO:0000314"/>
    <property type="project" value="MGI"/>
</dbReference>
<dbReference type="GO" id="GO:0042585">
    <property type="term" value="C:germinal vesicle"/>
    <property type="evidence" value="ECO:0000314"/>
    <property type="project" value="MGI"/>
</dbReference>
<dbReference type="GO" id="GO:0000776">
    <property type="term" value="C:kinetochore"/>
    <property type="evidence" value="ECO:0000314"/>
    <property type="project" value="MGI"/>
</dbReference>
<dbReference type="GO" id="GO:0016604">
    <property type="term" value="C:nuclear body"/>
    <property type="evidence" value="ECO:0007669"/>
    <property type="project" value="Ensembl"/>
</dbReference>
<dbReference type="GO" id="GO:0005634">
    <property type="term" value="C:nucleus"/>
    <property type="evidence" value="ECO:0000314"/>
    <property type="project" value="MGI"/>
</dbReference>
<dbReference type="GO" id="GO:0032993">
    <property type="term" value="C:protein-DNA complex"/>
    <property type="evidence" value="ECO:0000250"/>
    <property type="project" value="UniProtKB"/>
</dbReference>
<dbReference type="GO" id="GO:0005669">
    <property type="term" value="C:transcription factor TFIID complex"/>
    <property type="evidence" value="ECO:0007669"/>
    <property type="project" value="Ensembl"/>
</dbReference>
<dbReference type="GO" id="GO:0016407">
    <property type="term" value="F:acetyltransferase activity"/>
    <property type="evidence" value="ECO:0000250"/>
    <property type="project" value="UniProtKB"/>
</dbReference>
<dbReference type="GO" id="GO:0003677">
    <property type="term" value="F:DNA binding"/>
    <property type="evidence" value="ECO:0000314"/>
    <property type="project" value="MGI"/>
</dbReference>
<dbReference type="GO" id="GO:0004402">
    <property type="term" value="F:histone acetyltransferase activity"/>
    <property type="evidence" value="ECO:0007669"/>
    <property type="project" value="UniProtKB-EC"/>
</dbReference>
<dbReference type="GO" id="GO:0046966">
    <property type="term" value="F:nuclear thyroid hormone receptor binding"/>
    <property type="evidence" value="ECO:0007669"/>
    <property type="project" value="Ensembl"/>
</dbReference>
<dbReference type="GO" id="GO:1990841">
    <property type="term" value="F:promoter-specific chromatin binding"/>
    <property type="evidence" value="ECO:0000314"/>
    <property type="project" value="MGI"/>
</dbReference>
<dbReference type="GO" id="GO:0000993">
    <property type="term" value="F:RNA polymerase II complex binding"/>
    <property type="evidence" value="ECO:0000250"/>
    <property type="project" value="UniProtKB"/>
</dbReference>
<dbReference type="GO" id="GO:0000979">
    <property type="term" value="F:RNA polymerase II core promoter sequence-specific DNA binding"/>
    <property type="evidence" value="ECO:0007669"/>
    <property type="project" value="Ensembl"/>
</dbReference>
<dbReference type="GO" id="GO:0016251">
    <property type="term" value="F:RNA polymerase II general transcription initiation factor activity"/>
    <property type="evidence" value="ECO:0007669"/>
    <property type="project" value="Ensembl"/>
</dbReference>
<dbReference type="GO" id="GO:0017025">
    <property type="term" value="F:TBP-class protein binding"/>
    <property type="evidence" value="ECO:0007669"/>
    <property type="project" value="Ensembl"/>
</dbReference>
<dbReference type="GO" id="GO:0008270">
    <property type="term" value="F:zinc ion binding"/>
    <property type="evidence" value="ECO:0000250"/>
    <property type="project" value="UniProtKB"/>
</dbReference>
<dbReference type="GO" id="GO:0051276">
    <property type="term" value="P:chromosome organization"/>
    <property type="evidence" value="ECO:0000315"/>
    <property type="project" value="MGI"/>
</dbReference>
<dbReference type="GO" id="GO:0010467">
    <property type="term" value="P:gene expression"/>
    <property type="evidence" value="ECO:0000315"/>
    <property type="project" value="MGI"/>
</dbReference>
<dbReference type="GO" id="GO:0051177">
    <property type="term" value="P:meiotic sister chromatid cohesion"/>
    <property type="evidence" value="ECO:0000315"/>
    <property type="project" value="MGI"/>
</dbReference>
<dbReference type="GO" id="GO:0006473">
    <property type="term" value="P:protein acetylation"/>
    <property type="evidence" value="ECO:0000250"/>
    <property type="project" value="UniProtKB"/>
</dbReference>
<dbReference type="GO" id="GO:1990114">
    <property type="term" value="P:RNA polymerase II core complex assembly"/>
    <property type="evidence" value="ECO:0000250"/>
    <property type="project" value="UniProtKB"/>
</dbReference>
<dbReference type="GO" id="GO:0051123">
    <property type="term" value="P:RNA polymerase II preinitiation complex assembly"/>
    <property type="evidence" value="ECO:0000250"/>
    <property type="project" value="UniProtKB"/>
</dbReference>
<dbReference type="GO" id="GO:0051225">
    <property type="term" value="P:spindle assembly"/>
    <property type="evidence" value="ECO:0000315"/>
    <property type="project" value="MGI"/>
</dbReference>
<dbReference type="GO" id="GO:0006366">
    <property type="term" value="P:transcription by RNA polymerase II"/>
    <property type="evidence" value="ECO:0000250"/>
    <property type="project" value="UniProtKB"/>
</dbReference>
<dbReference type="GO" id="GO:0006367">
    <property type="term" value="P:transcription initiation at RNA polymerase II promoter"/>
    <property type="evidence" value="ECO:0000250"/>
    <property type="project" value="UniProtKB"/>
</dbReference>
<dbReference type="GO" id="GO:0001174">
    <property type="term" value="P:transcriptional start site selection at RNA polymerase II promoter"/>
    <property type="evidence" value="ECO:0000250"/>
    <property type="project" value="UniProtKB"/>
</dbReference>
<dbReference type="GO" id="GO:0019083">
    <property type="term" value="P:viral transcription"/>
    <property type="evidence" value="ECO:0000250"/>
    <property type="project" value="UniProtKB"/>
</dbReference>
<dbReference type="CDD" id="cd20551">
    <property type="entry name" value="CYCLIN_TFIIB_rpt1"/>
    <property type="match status" value="1"/>
</dbReference>
<dbReference type="CDD" id="cd20552">
    <property type="entry name" value="CYCLIN_TFIIB_rpt2"/>
    <property type="match status" value="1"/>
</dbReference>
<dbReference type="FunFam" id="1.10.472.10:FF:000008">
    <property type="entry name" value="Transcription initiation factor IIB"/>
    <property type="match status" value="1"/>
</dbReference>
<dbReference type="FunFam" id="2.20.25.10:FF:000007">
    <property type="entry name" value="Transcription initiation factor IIB"/>
    <property type="match status" value="1"/>
</dbReference>
<dbReference type="FunFam" id="1.10.472.10:FF:000019">
    <property type="entry name" value="transcription initiation factor IIB"/>
    <property type="match status" value="1"/>
</dbReference>
<dbReference type="Gene3D" id="2.20.25.10">
    <property type="match status" value="1"/>
</dbReference>
<dbReference type="Gene3D" id="1.10.472.10">
    <property type="entry name" value="Cyclin-like"/>
    <property type="match status" value="2"/>
</dbReference>
<dbReference type="InterPro" id="IPR013763">
    <property type="entry name" value="Cyclin-like_dom"/>
</dbReference>
<dbReference type="InterPro" id="IPR036915">
    <property type="entry name" value="Cyclin-like_sf"/>
</dbReference>
<dbReference type="InterPro" id="IPR000812">
    <property type="entry name" value="TFIIB"/>
</dbReference>
<dbReference type="InterPro" id="IPR023486">
    <property type="entry name" value="TFIIB_CS"/>
</dbReference>
<dbReference type="InterPro" id="IPR013150">
    <property type="entry name" value="TFIIB_cyclin"/>
</dbReference>
<dbReference type="InterPro" id="IPR013137">
    <property type="entry name" value="Znf_TFIIB"/>
</dbReference>
<dbReference type="PANTHER" id="PTHR11618:SF77">
    <property type="entry name" value="TRANSCRIPTION INITIATION FACTOR IIB"/>
    <property type="match status" value="1"/>
</dbReference>
<dbReference type="PANTHER" id="PTHR11618">
    <property type="entry name" value="TRANSCRIPTION INITIATION FACTOR IIB-RELATED"/>
    <property type="match status" value="1"/>
</dbReference>
<dbReference type="Pfam" id="PF00382">
    <property type="entry name" value="TFIIB"/>
    <property type="match status" value="2"/>
</dbReference>
<dbReference type="Pfam" id="PF08271">
    <property type="entry name" value="Zn_Ribbon_TF"/>
    <property type="match status" value="1"/>
</dbReference>
<dbReference type="PRINTS" id="PR00685">
    <property type="entry name" value="TIFACTORIIB"/>
</dbReference>
<dbReference type="SMART" id="SM00385">
    <property type="entry name" value="CYCLIN"/>
    <property type="match status" value="2"/>
</dbReference>
<dbReference type="SUPFAM" id="SSF47954">
    <property type="entry name" value="Cyclin-like"/>
    <property type="match status" value="2"/>
</dbReference>
<dbReference type="SUPFAM" id="SSF57783">
    <property type="entry name" value="Zinc beta-ribbon"/>
    <property type="match status" value="1"/>
</dbReference>
<dbReference type="PROSITE" id="PS00782">
    <property type="entry name" value="TFIIB"/>
    <property type="match status" value="2"/>
</dbReference>
<dbReference type="PROSITE" id="PS51134">
    <property type="entry name" value="ZF_TFIIB"/>
    <property type="match status" value="1"/>
</dbReference>